<sequence length="321" mass="36436">MGTNGVRVFVILYLLAVCGCIEYDVDDNVHICTHTNVSHINHTSWYYNDKVIALATEDKTSGYISSFIKRVNISLTCLNISSLRYEDSGTYKGVSHLKDGVIVTTTMNISVKANIVDLTGRVRYLTRNYCEVKIRCEITSFALNGSTTPPHMILGTVDKWKYLPFPTDDYRYVGELKRYISGNPYPTESLALEISSTFNRFTIVKNLNDDEFSCYLFSQNYSFHKMLNVRNICESKWKALNNNDNASSMPASHNNLANDLSSMMSQLQNDNDDNNDYSAPMNVDNLIMIVLITMLSIILVIIVVIAAISIYKRSKYRHIDN</sequence>
<organismHost>
    <name type="scientific">Homo sapiens</name>
    <name type="common">Human</name>
    <dbReference type="NCBI Taxonomy" id="9606"/>
</organismHost>
<evidence type="ECO:0000250" key="1">
    <source>
        <dbReference type="UniProtKB" id="P24358"/>
    </source>
</evidence>
<evidence type="ECO:0000255" key="2"/>
<evidence type="ECO:0000305" key="3"/>
<name>PG049_VACCP</name>
<organism>
    <name type="scientific">Vaccinia virus (strain L-IVP)</name>
    <name type="common">VACV</name>
    <dbReference type="NCBI Taxonomy" id="31531"/>
    <lineage>
        <taxon>Viruses</taxon>
        <taxon>Varidnaviria</taxon>
        <taxon>Bamfordvirae</taxon>
        <taxon>Nucleocytoviricota</taxon>
        <taxon>Pokkesviricetes</taxon>
        <taxon>Chitovirales</taxon>
        <taxon>Poxviridae</taxon>
        <taxon>Chordopoxvirinae</taxon>
        <taxon>Orthopoxvirus</taxon>
        <taxon>Vaccinia virus</taxon>
    </lineage>
</organism>
<protein>
    <recommendedName>
        <fullName>Protein OPG049</fullName>
    </recommendedName>
    <alternativeName>
        <fullName>36 kDa major membrane protein F5</fullName>
    </alternativeName>
</protein>
<reference key="1">
    <citation type="journal article" date="1990" name="Dokl. Biochem.">
        <title>Localization of the vaccinia virus gene coding for the major membrane protein 36k.</title>
        <authorList>
            <person name="Prikhod'Ko G.G."/>
            <person name="Cheshenko N.V."/>
            <person name="Netesova N.A."/>
            <person name="Kozhina E.N."/>
            <person name="Totmenin A.V."/>
            <person name="Lebedeva T.V."/>
            <person name="Malygin E.G."/>
            <person name="Vasilenko S.K."/>
        </authorList>
    </citation>
    <scope>NUCLEOTIDE SEQUENCE [MRNA]</scope>
</reference>
<reference key="2">
    <citation type="journal article" date="1988" name="Biotekhnologiya">
        <title>Structural-functional organization of segment of vaccinia virus genome.</title>
        <authorList>
            <person name="Mikryukov N.N."/>
            <person name="Chizhikov V.E."/>
            <person name="Prikhod'Ko G.G."/>
            <person name="Urmmanov I.M."/>
            <person name="Serpinskii O.I."/>
            <person name="Blinov V.M."/>
            <person name="Nikulin A.E."/>
            <person name="Vasilenko S.K."/>
        </authorList>
    </citation>
    <scope>NUCLEOTIDE SEQUENCE [GENOMIC DNA]</scope>
</reference>
<gene>
    <name type="primary">OPG049</name>
    <name type="ORF">F13</name>
</gene>
<accession>Q00320</accession>
<feature type="signal peptide" evidence="2">
    <location>
        <begin position="1"/>
        <end position="20"/>
    </location>
</feature>
<feature type="chain" id="PRO_0000040615" description="Protein OPG049">
    <location>
        <begin position="21"/>
        <end position="321"/>
    </location>
</feature>
<feature type="transmembrane region" description="Helical" evidence="2">
    <location>
        <begin position="286"/>
        <end position="306"/>
    </location>
</feature>
<feature type="glycosylation site" description="N-linked (GlcNAc...) asparagine; by host" evidence="2">
    <location>
        <position position="36"/>
    </location>
</feature>
<feature type="glycosylation site" description="N-linked (GlcNAc...) asparagine; by host" evidence="2">
    <location>
        <position position="41"/>
    </location>
</feature>
<feature type="glycosylation site" description="N-linked (GlcNAc...) asparagine; by host" evidence="2">
    <location>
        <position position="72"/>
    </location>
</feature>
<feature type="glycosylation site" description="N-linked (GlcNAc...) asparagine; by host" evidence="2">
    <location>
        <position position="79"/>
    </location>
</feature>
<feature type="glycosylation site" description="N-linked (GlcNAc...) asparagine; by host" evidence="2">
    <location>
        <position position="108"/>
    </location>
</feature>
<feature type="glycosylation site" description="N-linked (GlcNAc...) asparagine; by host" evidence="2">
    <location>
        <position position="144"/>
    </location>
</feature>
<feature type="glycosylation site" description="N-linked (GlcNAc...) asparagine; by host" evidence="2">
    <location>
        <position position="220"/>
    </location>
</feature>
<feature type="glycosylation site" description="N-linked (GlcNAc...) asparagine; by host" evidence="2">
    <location>
        <position position="245"/>
    </location>
</feature>
<dbReference type="EMBL" id="X61154">
    <property type="protein sequence ID" value="CAA43468.1"/>
    <property type="molecule type" value="mRNA"/>
</dbReference>
<dbReference type="EMBL" id="M57977">
    <property type="protein sequence ID" value="AAA48293.1"/>
    <property type="molecule type" value="Genomic_DNA"/>
</dbReference>
<dbReference type="SMR" id="Q00320"/>
<dbReference type="GO" id="GO:0020002">
    <property type="term" value="C:host cell plasma membrane"/>
    <property type="evidence" value="ECO:0007669"/>
    <property type="project" value="UniProtKB-SubCell"/>
</dbReference>
<dbReference type="GO" id="GO:0016020">
    <property type="term" value="C:membrane"/>
    <property type="evidence" value="ECO:0007669"/>
    <property type="project" value="UniProtKB-KW"/>
</dbReference>
<dbReference type="GO" id="GO:0016032">
    <property type="term" value="P:viral process"/>
    <property type="evidence" value="ECO:0007669"/>
    <property type="project" value="InterPro"/>
</dbReference>
<dbReference type="Gene3D" id="2.60.40.10">
    <property type="entry name" value="Immunoglobulins"/>
    <property type="match status" value="1"/>
</dbReference>
<dbReference type="InterPro" id="IPR036179">
    <property type="entry name" value="Ig-like_dom_sf"/>
</dbReference>
<dbReference type="InterPro" id="IPR013783">
    <property type="entry name" value="Ig-like_fold"/>
</dbReference>
<dbReference type="InterPro" id="IPR007674">
    <property type="entry name" value="Poxvirus_F5/I6_dom"/>
</dbReference>
<dbReference type="Pfam" id="PF04595">
    <property type="entry name" value="Pox_I6"/>
    <property type="match status" value="1"/>
</dbReference>
<dbReference type="SUPFAM" id="SSF48726">
    <property type="entry name" value="Immunoglobulin"/>
    <property type="match status" value="1"/>
</dbReference>
<keyword id="KW-0325">Glycoprotein</keyword>
<keyword id="KW-1032">Host cell membrane</keyword>
<keyword id="KW-1043">Host membrane</keyword>
<keyword id="KW-0472">Membrane</keyword>
<keyword id="KW-0732">Signal</keyword>
<keyword id="KW-0812">Transmembrane</keyword>
<keyword id="KW-1133">Transmembrane helix</keyword>
<comment type="function">
    <text evidence="1">Plays a role in the spread of virus to neighboring cells ex vivo.</text>
</comment>
<comment type="subcellular location">
    <subcellularLocation>
        <location evidence="1">Host cell membrane</location>
        <topology evidence="1">Single-pass membrane protein</topology>
    </subcellularLocation>
    <text evidence="1">May localize at the surface of cytoplasmic extensions at the periphery of the cell.</text>
</comment>
<comment type="induction">
    <text evidence="1">Expressed in the early phase of the viral replicative cycle.</text>
</comment>
<comment type="similarity">
    <text evidence="3">Belongs to the orthopoxvirus OPG049 family.</text>
</comment>
<proteinExistence type="evidence at transcript level"/>